<comment type="function">
    <text evidence="3">Antimicrobial peptide with activity against the Gram-positive bacterium S.aureus NCTC 10788 (MIC=50 um) and the yeast C.albicans NCPF 1467 (MIC=150 uM). Ineffective against the Gram-negative bacterium E.coli NCTC 10418. Induces a dose-dependent contraction of rat urinary bladder smooth muscle (EC50=2.9 nM) and a dose-dependent relaxation of rat tail artery smooth muscle (EC50=37.7 nM).</text>
</comment>
<comment type="subcellular location">
    <subcellularLocation>
        <location evidence="3">Secreted</location>
    </subcellularLocation>
</comment>
<comment type="tissue specificity">
    <text evidence="5">Expressed by the skin glands.</text>
</comment>
<comment type="mass spectrometry"/>
<comment type="similarity">
    <text evidence="1">Belongs to the frog skin active peptide (FSAP) family. Brevinin subfamily.</text>
</comment>
<protein>
    <recommendedName>
        <fullName evidence="6">Senegalin</fullName>
    </recommendedName>
</protein>
<proteinExistence type="evidence at protein level"/>
<organism>
    <name type="scientific">Kassina senegalensis</name>
    <name type="common">Senegal running frog</name>
    <dbReference type="NCBI Taxonomy" id="8415"/>
    <lineage>
        <taxon>Eukaryota</taxon>
        <taxon>Metazoa</taxon>
        <taxon>Chordata</taxon>
        <taxon>Craniata</taxon>
        <taxon>Vertebrata</taxon>
        <taxon>Euteleostomi</taxon>
        <taxon>Amphibia</taxon>
        <taxon>Batrachia</taxon>
        <taxon>Anura</taxon>
        <taxon>Neobatrachia</taxon>
        <taxon>Microhyloidea</taxon>
        <taxon>Hyperoliidae</taxon>
        <taxon>Kassina</taxon>
    </lineage>
</organism>
<evidence type="ECO:0000255" key="1"/>
<evidence type="ECO:0000256" key="2">
    <source>
        <dbReference type="SAM" id="MobiDB-lite"/>
    </source>
</evidence>
<evidence type="ECO:0000269" key="3">
    <source>
    </source>
</evidence>
<evidence type="ECO:0000305" key="4"/>
<evidence type="ECO:0000305" key="5">
    <source>
    </source>
</evidence>
<evidence type="ECO:0000312" key="6">
    <source>
        <dbReference type="EMBL" id="CCI74234.1"/>
    </source>
</evidence>
<keyword id="KW-0027">Amidation</keyword>
<keyword id="KW-0878">Amphibian defense peptide</keyword>
<keyword id="KW-0044">Antibiotic</keyword>
<keyword id="KW-0929">Antimicrobial</keyword>
<keyword id="KW-0165">Cleavage on pair of basic residues</keyword>
<keyword id="KW-0903">Direct protein sequencing</keyword>
<keyword id="KW-0295">Fungicide</keyword>
<keyword id="KW-0964">Secreted</keyword>
<keyword id="KW-0732">Signal</keyword>
<dbReference type="EMBL" id="HE863807">
    <property type="protein sequence ID" value="CCI74234.1"/>
    <property type="molecule type" value="mRNA"/>
</dbReference>
<dbReference type="GO" id="GO:0005576">
    <property type="term" value="C:extracellular region"/>
    <property type="evidence" value="ECO:0007669"/>
    <property type="project" value="UniProtKB-SubCell"/>
</dbReference>
<dbReference type="GO" id="GO:0042742">
    <property type="term" value="P:defense response to bacterium"/>
    <property type="evidence" value="ECO:0007669"/>
    <property type="project" value="UniProtKB-KW"/>
</dbReference>
<dbReference type="GO" id="GO:0050832">
    <property type="term" value="P:defense response to fungus"/>
    <property type="evidence" value="ECO:0007669"/>
    <property type="project" value="UniProtKB-KW"/>
</dbReference>
<dbReference type="GO" id="GO:0031640">
    <property type="term" value="P:killing of cells of another organism"/>
    <property type="evidence" value="ECO:0007669"/>
    <property type="project" value="UniProtKB-KW"/>
</dbReference>
<dbReference type="InterPro" id="IPR004275">
    <property type="entry name" value="Frog_antimicrobial_propeptide"/>
</dbReference>
<dbReference type="Pfam" id="PF03032">
    <property type="entry name" value="FSAP_sig_propep"/>
    <property type="match status" value="1"/>
</dbReference>
<name>SENEG_KASSE</name>
<reference evidence="4 6" key="1">
    <citation type="journal article" date="2013" name="Amino Acids">
        <title>Senegalin: a novel antimicrobial/myotropic hexadecapeptide from the skin secretion of the African running frog, Kassina senegalensis.</title>
        <authorList>
            <person name="Wang H."/>
            <person name="Li R."/>
            <person name="Xi X."/>
            <person name="Meng T."/>
            <person name="Zhou M."/>
            <person name="Wang L."/>
            <person name="Zhang Y."/>
            <person name="Chen T."/>
            <person name="Shaw C."/>
        </authorList>
    </citation>
    <scope>NUCLEOTIDE SEQUENCE [MRNA]</scope>
    <scope>PROTEIN SEQUENCE OF 60-75</scope>
    <scope>FUNCTION</scope>
    <scope>SYNTHESIS</scope>
    <scope>SUBCELLULAR LOCATION</scope>
    <scope>TISSUE SPECIFICITY</scope>
    <scope>MASS SPECTROMETRY</scope>
    <scope>AMIDATION AT LEU-75</scope>
    <source>
        <tissue evidence="3">Skin secretion</tissue>
    </source>
</reference>
<accession>L0P323</accession>
<sequence>MLSLKKSMLLLFFLGMVSFSLANKRSDGKRADEEGEDKRADEEGEDKRADEEGEDKRKRFLPFLIPALTSLISSLG</sequence>
<feature type="signal peptide" evidence="1">
    <location>
        <begin position="1"/>
        <end position="22"/>
    </location>
</feature>
<feature type="propeptide" id="PRO_5001105169" evidence="1 3">
    <location>
        <begin position="23"/>
        <end position="55"/>
    </location>
</feature>
<feature type="peptide" id="PRO_5001105170" description="Senegalin" evidence="3">
    <location>
        <begin position="60"/>
        <end position="75"/>
    </location>
</feature>
<feature type="region of interest" description="Disordered" evidence="2">
    <location>
        <begin position="24"/>
        <end position="54"/>
    </location>
</feature>
<feature type="modified residue" description="Leucine amide" evidence="3">
    <location>
        <position position="75"/>
    </location>
</feature>